<protein>
    <recommendedName>
        <fullName evidence="1">Lipoprotein-releasing system ATP-binding protein LolD</fullName>
        <ecNumber evidence="1">7.6.2.-</ecNumber>
    </recommendedName>
</protein>
<dbReference type="EC" id="7.6.2.-" evidence="1"/>
<dbReference type="EMBL" id="AP008229">
    <property type="protein sequence ID" value="BAE68936.1"/>
    <property type="molecule type" value="Genomic_DNA"/>
</dbReference>
<dbReference type="RefSeq" id="WP_011258980.1">
    <property type="nucleotide sequence ID" value="NC_007705.1"/>
</dbReference>
<dbReference type="SMR" id="Q2P3E1"/>
<dbReference type="KEGG" id="xom:XOO2181"/>
<dbReference type="HOGENOM" id="CLU_000604_1_22_6"/>
<dbReference type="GO" id="GO:0005886">
    <property type="term" value="C:plasma membrane"/>
    <property type="evidence" value="ECO:0007669"/>
    <property type="project" value="UniProtKB-SubCell"/>
</dbReference>
<dbReference type="GO" id="GO:0005524">
    <property type="term" value="F:ATP binding"/>
    <property type="evidence" value="ECO:0007669"/>
    <property type="project" value="UniProtKB-KW"/>
</dbReference>
<dbReference type="GO" id="GO:0016887">
    <property type="term" value="F:ATP hydrolysis activity"/>
    <property type="evidence" value="ECO:0007669"/>
    <property type="project" value="InterPro"/>
</dbReference>
<dbReference type="GO" id="GO:0022857">
    <property type="term" value="F:transmembrane transporter activity"/>
    <property type="evidence" value="ECO:0007669"/>
    <property type="project" value="TreeGrafter"/>
</dbReference>
<dbReference type="GO" id="GO:0044874">
    <property type="term" value="P:lipoprotein localization to outer membrane"/>
    <property type="evidence" value="ECO:0007669"/>
    <property type="project" value="TreeGrafter"/>
</dbReference>
<dbReference type="GO" id="GO:0089705">
    <property type="term" value="P:protein localization to outer membrane"/>
    <property type="evidence" value="ECO:0007669"/>
    <property type="project" value="TreeGrafter"/>
</dbReference>
<dbReference type="CDD" id="cd03255">
    <property type="entry name" value="ABC_MJ0796_LolCDE_FtsE"/>
    <property type="match status" value="1"/>
</dbReference>
<dbReference type="FunFam" id="3.40.50.300:FF:000230">
    <property type="entry name" value="Lipoprotein-releasing system ATP-binding protein LolD"/>
    <property type="match status" value="1"/>
</dbReference>
<dbReference type="Gene3D" id="3.40.50.300">
    <property type="entry name" value="P-loop containing nucleotide triphosphate hydrolases"/>
    <property type="match status" value="1"/>
</dbReference>
<dbReference type="InterPro" id="IPR003593">
    <property type="entry name" value="AAA+_ATPase"/>
</dbReference>
<dbReference type="InterPro" id="IPR003439">
    <property type="entry name" value="ABC_transporter-like_ATP-bd"/>
</dbReference>
<dbReference type="InterPro" id="IPR015854">
    <property type="entry name" value="ABC_transpr_LolD-like"/>
</dbReference>
<dbReference type="InterPro" id="IPR011924">
    <property type="entry name" value="LolD_lipo_ATP-bd"/>
</dbReference>
<dbReference type="InterPro" id="IPR017911">
    <property type="entry name" value="MacB-like_ATP-bd"/>
</dbReference>
<dbReference type="InterPro" id="IPR027417">
    <property type="entry name" value="P-loop_NTPase"/>
</dbReference>
<dbReference type="NCBIfam" id="TIGR02211">
    <property type="entry name" value="LolD_lipo_ex"/>
    <property type="match status" value="1"/>
</dbReference>
<dbReference type="PANTHER" id="PTHR24220">
    <property type="entry name" value="IMPORT ATP-BINDING PROTEIN"/>
    <property type="match status" value="1"/>
</dbReference>
<dbReference type="PANTHER" id="PTHR24220:SF689">
    <property type="entry name" value="LIPOPROTEIN-RELEASING SYSTEM ATP-BINDING PROTEIN LOLD"/>
    <property type="match status" value="1"/>
</dbReference>
<dbReference type="Pfam" id="PF00005">
    <property type="entry name" value="ABC_tran"/>
    <property type="match status" value="1"/>
</dbReference>
<dbReference type="SMART" id="SM00382">
    <property type="entry name" value="AAA"/>
    <property type="match status" value="1"/>
</dbReference>
<dbReference type="SUPFAM" id="SSF52540">
    <property type="entry name" value="P-loop containing nucleoside triphosphate hydrolases"/>
    <property type="match status" value="1"/>
</dbReference>
<dbReference type="PROSITE" id="PS50893">
    <property type="entry name" value="ABC_TRANSPORTER_2"/>
    <property type="match status" value="1"/>
</dbReference>
<dbReference type="PROSITE" id="PS51244">
    <property type="entry name" value="LOLD"/>
    <property type="match status" value="1"/>
</dbReference>
<keyword id="KW-0067">ATP-binding</keyword>
<keyword id="KW-0997">Cell inner membrane</keyword>
<keyword id="KW-1003">Cell membrane</keyword>
<keyword id="KW-0472">Membrane</keyword>
<keyword id="KW-0547">Nucleotide-binding</keyword>
<keyword id="KW-1278">Translocase</keyword>
<keyword id="KW-0813">Transport</keyword>
<accession>Q2P3E1</accession>
<proteinExistence type="inferred from homology"/>
<reference key="1">
    <citation type="journal article" date="2005" name="Jpn. Agric. Res. Q.">
        <title>Genome sequence of Xanthomonas oryzae pv. oryzae suggests contribution of large numbers of effector genes and insertion sequences to its race diversity.</title>
        <authorList>
            <person name="Ochiai H."/>
            <person name="Inoue Y."/>
            <person name="Takeya M."/>
            <person name="Sasaki A."/>
            <person name="Kaku H."/>
        </authorList>
    </citation>
    <scope>NUCLEOTIDE SEQUENCE [LARGE SCALE GENOMIC DNA]</scope>
    <source>
        <strain>MAFF 311018</strain>
    </source>
</reference>
<name>LOLD_XANOM</name>
<gene>
    <name evidence="1" type="primary">lolD</name>
    <name type="ordered locus">XOO2181</name>
</gene>
<feature type="chain" id="PRO_0000272168" description="Lipoprotein-releasing system ATP-binding protein LolD">
    <location>
        <begin position="1"/>
        <end position="244"/>
    </location>
</feature>
<feature type="domain" description="ABC transporter" evidence="1">
    <location>
        <begin position="19"/>
        <end position="244"/>
    </location>
</feature>
<feature type="binding site" evidence="1">
    <location>
        <begin position="55"/>
        <end position="62"/>
    </location>
    <ligand>
        <name>ATP</name>
        <dbReference type="ChEBI" id="CHEBI:30616"/>
    </ligand>
</feature>
<evidence type="ECO:0000255" key="1">
    <source>
        <dbReference type="HAMAP-Rule" id="MF_01708"/>
    </source>
</evidence>
<organism>
    <name type="scientific">Xanthomonas oryzae pv. oryzae (strain MAFF 311018)</name>
    <dbReference type="NCBI Taxonomy" id="342109"/>
    <lineage>
        <taxon>Bacteria</taxon>
        <taxon>Pseudomonadati</taxon>
        <taxon>Pseudomonadota</taxon>
        <taxon>Gammaproteobacteria</taxon>
        <taxon>Lysobacterales</taxon>
        <taxon>Lysobacteraceae</taxon>
        <taxon>Xanthomonas</taxon>
    </lineage>
</organism>
<sequence>MNEIREAVVQTPEQATAVIRAEALAKTYAEGKMRTPVFDGLDLSVATGETVAIVGASGAGKSTLLHLLGGLDIPTAGEVYVAGERMSALSDAQRGKLRNQSLGFVYQFHHLLPEFTALENVMMPVLLSGKNVAVAKGQALQLLESVGLGHRIDHKPSELSGGERQRCAVARALVNKPGCVLGDEPTGNLDDKTAGTVFELMLELNRAQRTSLVLVTHDRGLARRLDRVLELHQGKLRELAPSAV</sequence>
<comment type="function">
    <text evidence="1">Part of the ABC transporter complex LolCDE involved in the translocation of mature outer membrane-directed lipoproteins, from the inner membrane to the periplasmic chaperone, LolA. Responsible for the formation of the LolA-lipoprotein complex in an ATP-dependent manner.</text>
</comment>
<comment type="subunit">
    <text evidence="1">The complex is composed of two ATP-binding proteins (LolD) and two transmembrane proteins (LolC and LolE).</text>
</comment>
<comment type="subcellular location">
    <subcellularLocation>
        <location evidence="1">Cell inner membrane</location>
        <topology evidence="1">Peripheral membrane protein</topology>
    </subcellularLocation>
</comment>
<comment type="similarity">
    <text evidence="1">Belongs to the ABC transporter superfamily. Lipoprotein translocase (TC 3.A.1.125) family.</text>
</comment>